<accession>O31526</accession>
<keyword id="KW-0002">3D-structure</keyword>
<keyword id="KW-0106">Calcium</keyword>
<keyword id="KW-0961">Cell wall biogenesis/degradation</keyword>
<keyword id="KW-0903">Direct protein sequencing</keyword>
<keyword id="KW-0456">Lyase</keyword>
<keyword id="KW-0479">Metal-binding</keyword>
<keyword id="KW-1185">Reference proteome</keyword>
<keyword id="KW-0964">Secreted</keyword>
<keyword id="KW-0732">Signal</keyword>
<organism>
    <name type="scientific">Bacillus subtilis (strain 168)</name>
    <dbReference type="NCBI Taxonomy" id="224308"/>
    <lineage>
        <taxon>Bacteria</taxon>
        <taxon>Bacillati</taxon>
        <taxon>Bacillota</taxon>
        <taxon>Bacilli</taxon>
        <taxon>Bacillales</taxon>
        <taxon>Bacillaceae</taxon>
        <taxon>Bacillus</taxon>
    </lineage>
</organism>
<sequence length="620" mass="67587">MRRSCLMIRRRKRMFTAVTLLVLLVMGTSVCPVKAEGAARQMEALNRGLVAVKTDGGIFVSWRFLGTENASVLFNVYRDGQKLNAAPVKTTNYVDKNGSAGSTYTVRAVVNGTEQPASEKASVWAQPYHSVPLDKPAGGTTPKGESYTYSANDASVGDVDGDGQYELILKWDPSNSKDNSQDGYTGDVLIDAYKLDGTKLWRINLGKNIRAGAHYTQFMVYDLDGDGKAEVAMKTADGTKDGTGKVIGNANADYRNEQGRVLSGPEYLTVFQGSTGKELVTANFEPARGNVSDWGDSYGNRVDRFLAGIAYLDGQRPSLIMTRGYYAKTMLVAYNFRDGKLSKLWTLDSSKSGNEAFAGQGNHNLSIADVDGDGKDEIIFGSMAVDHDGKGMYSTGLGHGDALHTGDLDPGRPGLEVFQVHEDKNAKYGLSFRDAATGKILWGVYAGKDVGRGMAADIDPRYPGQEVWANGSLYSAKGVKIGSGVPSSTNFGIWWDGDLLREQLDSNRIDKWDYQNGVSKNMLTASGAAANNGTKATPTLQADLLGDWREEVVWRTEDSSALRIYTTTIPTEHRLYTLMHDPVYRLGIAWQNIAYNQPPHTSFFLGDGMAEQPKPNMYTP</sequence>
<gene>
    <name type="primary">yesW</name>
    <name type="ordered locus">BSU07050</name>
</gene>
<proteinExistence type="evidence at protein level"/>
<reference key="1">
    <citation type="journal article" date="1997" name="Nature">
        <title>The complete genome sequence of the Gram-positive bacterium Bacillus subtilis.</title>
        <authorList>
            <person name="Kunst F."/>
            <person name="Ogasawara N."/>
            <person name="Moszer I."/>
            <person name="Albertini A.M."/>
            <person name="Alloni G."/>
            <person name="Azevedo V."/>
            <person name="Bertero M.G."/>
            <person name="Bessieres P."/>
            <person name="Bolotin A."/>
            <person name="Borchert S."/>
            <person name="Borriss R."/>
            <person name="Boursier L."/>
            <person name="Brans A."/>
            <person name="Braun M."/>
            <person name="Brignell S.C."/>
            <person name="Bron S."/>
            <person name="Brouillet S."/>
            <person name="Bruschi C.V."/>
            <person name="Caldwell B."/>
            <person name="Capuano V."/>
            <person name="Carter N.M."/>
            <person name="Choi S.-K."/>
            <person name="Codani J.-J."/>
            <person name="Connerton I.F."/>
            <person name="Cummings N.J."/>
            <person name="Daniel R.A."/>
            <person name="Denizot F."/>
            <person name="Devine K.M."/>
            <person name="Duesterhoeft A."/>
            <person name="Ehrlich S.D."/>
            <person name="Emmerson P.T."/>
            <person name="Entian K.-D."/>
            <person name="Errington J."/>
            <person name="Fabret C."/>
            <person name="Ferrari E."/>
            <person name="Foulger D."/>
            <person name="Fritz C."/>
            <person name="Fujita M."/>
            <person name="Fujita Y."/>
            <person name="Fuma S."/>
            <person name="Galizzi A."/>
            <person name="Galleron N."/>
            <person name="Ghim S.-Y."/>
            <person name="Glaser P."/>
            <person name="Goffeau A."/>
            <person name="Golightly E.J."/>
            <person name="Grandi G."/>
            <person name="Guiseppi G."/>
            <person name="Guy B.J."/>
            <person name="Haga K."/>
            <person name="Haiech J."/>
            <person name="Harwood C.R."/>
            <person name="Henaut A."/>
            <person name="Hilbert H."/>
            <person name="Holsappel S."/>
            <person name="Hosono S."/>
            <person name="Hullo M.-F."/>
            <person name="Itaya M."/>
            <person name="Jones L.-M."/>
            <person name="Joris B."/>
            <person name="Karamata D."/>
            <person name="Kasahara Y."/>
            <person name="Klaerr-Blanchard M."/>
            <person name="Klein C."/>
            <person name="Kobayashi Y."/>
            <person name="Koetter P."/>
            <person name="Koningstein G."/>
            <person name="Krogh S."/>
            <person name="Kumano M."/>
            <person name="Kurita K."/>
            <person name="Lapidus A."/>
            <person name="Lardinois S."/>
            <person name="Lauber J."/>
            <person name="Lazarevic V."/>
            <person name="Lee S.-M."/>
            <person name="Levine A."/>
            <person name="Liu H."/>
            <person name="Masuda S."/>
            <person name="Mauel C."/>
            <person name="Medigue C."/>
            <person name="Medina N."/>
            <person name="Mellado R.P."/>
            <person name="Mizuno M."/>
            <person name="Moestl D."/>
            <person name="Nakai S."/>
            <person name="Noback M."/>
            <person name="Noone D."/>
            <person name="O'Reilly M."/>
            <person name="Ogawa K."/>
            <person name="Ogiwara A."/>
            <person name="Oudega B."/>
            <person name="Park S.-H."/>
            <person name="Parro V."/>
            <person name="Pohl T.M."/>
            <person name="Portetelle D."/>
            <person name="Porwollik S."/>
            <person name="Prescott A.M."/>
            <person name="Presecan E."/>
            <person name="Pujic P."/>
            <person name="Purnelle B."/>
            <person name="Rapoport G."/>
            <person name="Rey M."/>
            <person name="Reynolds S."/>
            <person name="Rieger M."/>
            <person name="Rivolta C."/>
            <person name="Rocha E."/>
            <person name="Roche B."/>
            <person name="Rose M."/>
            <person name="Sadaie Y."/>
            <person name="Sato T."/>
            <person name="Scanlan E."/>
            <person name="Schleich S."/>
            <person name="Schroeter R."/>
            <person name="Scoffone F."/>
            <person name="Sekiguchi J."/>
            <person name="Sekowska A."/>
            <person name="Seror S.J."/>
            <person name="Serror P."/>
            <person name="Shin B.-S."/>
            <person name="Soldo B."/>
            <person name="Sorokin A."/>
            <person name="Tacconi E."/>
            <person name="Takagi T."/>
            <person name="Takahashi H."/>
            <person name="Takemaru K."/>
            <person name="Takeuchi M."/>
            <person name="Tamakoshi A."/>
            <person name="Tanaka T."/>
            <person name="Terpstra P."/>
            <person name="Tognoni A."/>
            <person name="Tosato V."/>
            <person name="Uchiyama S."/>
            <person name="Vandenbol M."/>
            <person name="Vannier F."/>
            <person name="Vassarotti A."/>
            <person name="Viari A."/>
            <person name="Wambutt R."/>
            <person name="Wedler E."/>
            <person name="Wedler H."/>
            <person name="Weitzenegger T."/>
            <person name="Winters P."/>
            <person name="Wipat A."/>
            <person name="Yamamoto H."/>
            <person name="Yamane K."/>
            <person name="Yasumoto K."/>
            <person name="Yata K."/>
            <person name="Yoshida K."/>
            <person name="Yoshikawa H.-F."/>
            <person name="Zumstein E."/>
            <person name="Yoshikawa H."/>
            <person name="Danchin A."/>
        </authorList>
    </citation>
    <scope>NUCLEOTIDE SEQUENCE [LARGE SCALE GENOMIC DNA]</scope>
    <source>
        <strain>168</strain>
    </source>
</reference>
<reference key="2">
    <citation type="journal article" date="2006" name="Acta Crystallogr. F">
        <title>Crystallization and preliminary X-ray analysis of the rhamnogalacturonan lyase YesW from Bacillus subtilis strain 168, a member of polysaccharide lyase family 11.</title>
        <authorList>
            <person name="Ochiai A."/>
            <person name="Yamasaki M."/>
            <person name="Itoh T."/>
            <person name="Mikami B."/>
            <person name="Hashimoto W."/>
            <person name="Murata K."/>
        </authorList>
    </citation>
    <scope>PROTEIN SEQUENCE OF 38-46</scope>
    <scope>CRYSTALLIZATION</scope>
    <scope>COFACTOR</scope>
    <scope>FUNCTION</scope>
    <scope>SUBUNIT</scope>
    <source>
        <strain>168</strain>
    </source>
</reference>
<reference key="3">
    <citation type="journal article" date="2007" name="Appl. Environ. Microbiol.">
        <title>Plant cell wall degradation by saprophytic Bacillus subtilis strains: gene clusters responsible for rhamnogalacturonan depolymerization.</title>
        <authorList>
            <person name="Ochiai A."/>
            <person name="Itoh T."/>
            <person name="Kawamata A."/>
            <person name="Hashimoto W."/>
            <person name="Murata K."/>
        </authorList>
    </citation>
    <scope>FUNCTION</scope>
    <scope>CATALYTIC ACTIVITY</scope>
    <scope>BIOPHYSICOCHEMICAL PROPERTIES</scope>
    <scope>COFACTOR</scope>
    <scope>SUBCELLULAR LOCATION</scope>
    <scope>INDUCTION</scope>
</reference>
<reference evidence="9 10" key="4">
    <citation type="journal article" date="2007" name="J. Biol. Chem.">
        <title>A novel structural fold in polysaccharide lyases: Bacillus subtilis family 11 rhamnogalacturonan lyase YesW with an eight-bladed beta-propeller.</title>
        <authorList>
            <person name="Ochiai A."/>
            <person name="Itoh T."/>
            <person name="Maruyama Y."/>
            <person name="Kawamata A."/>
            <person name="Mikami B."/>
            <person name="Hashimoto W."/>
            <person name="Murata K."/>
        </authorList>
    </citation>
    <scope>X-RAY CRYSTALLOGRAPHY (1.4 ANGSTROMS) OF 38-620 IN COMPLEX WITH GALACTURONAN DISACCHARIDE AND CALCIUM IONS</scope>
    <scope>MUTAGENESIS OF HIS-363; HIS-399; ASP-401; GLU-422; ARG-452; LYS-535 AND TYR-595</scope>
    <source>
        <strain>168</strain>
    </source>
</reference>
<reference evidence="11" key="5">
    <citation type="journal article" date="2009" name="J. Biol. Chem.">
        <title>Structural determinants responsible for substrate recognition and mode of action in family 11 polysaccharide lyases.</title>
        <authorList>
            <person name="Ochiai A."/>
            <person name="Itoh T."/>
            <person name="Mikami B."/>
            <person name="Hashimoto W."/>
            <person name="Murata K."/>
        </authorList>
    </citation>
    <scope>X-RAY CRYSTALLOGRAPHY (1.32 ANGSTROMS) OF 38-620 IN COMPLEX WITH CALCIUM AND RHAMNOSE</scope>
    <scope>FUNCTION</scope>
    <scope>CATALYTIC ACTIVITY</scope>
    <scope>COFACTOR</scope>
    <scope>BIOPHYSICOCHEMICAL PROPERTIES</scope>
    <scope>SUBUNIT</scope>
    <scope>DOMAIN</scope>
    <source>
        <strain evidence="6">168</strain>
    </source>
</reference>
<evidence type="ECO:0000256" key="1">
    <source>
        <dbReference type="SAM" id="MobiDB-lite"/>
    </source>
</evidence>
<evidence type="ECO:0000269" key="2">
    <source>
    </source>
</evidence>
<evidence type="ECO:0000269" key="3">
    <source>
    </source>
</evidence>
<evidence type="ECO:0000269" key="4">
    <source>
    </source>
</evidence>
<evidence type="ECO:0000269" key="5">
    <source>
    </source>
</evidence>
<evidence type="ECO:0000303" key="6">
    <source>
    </source>
</evidence>
<evidence type="ECO:0000305" key="7"/>
<evidence type="ECO:0000305" key="8">
    <source>
    </source>
</evidence>
<evidence type="ECO:0007744" key="9">
    <source>
        <dbReference type="PDB" id="2Z8R"/>
    </source>
</evidence>
<evidence type="ECO:0007744" key="10">
    <source>
        <dbReference type="PDB" id="2Z8S"/>
    </source>
</evidence>
<evidence type="ECO:0007744" key="11">
    <source>
        <dbReference type="PDB" id="2ZUX"/>
    </source>
</evidence>
<evidence type="ECO:0007829" key="12">
    <source>
        <dbReference type="PDB" id="2Z8R"/>
    </source>
</evidence>
<evidence type="ECO:0007829" key="13">
    <source>
        <dbReference type="PDB" id="2Z8S"/>
    </source>
</evidence>
<evidence type="ECO:0007829" key="14">
    <source>
        <dbReference type="PDB" id="2ZUX"/>
    </source>
</evidence>
<dbReference type="EC" id="4.2.2.23" evidence="3 5"/>
<dbReference type="EMBL" id="AL009126">
    <property type="protein sequence ID" value="CAB12524.1"/>
    <property type="molecule type" value="Genomic_DNA"/>
</dbReference>
<dbReference type="PIR" id="F69797">
    <property type="entry name" value="F69797"/>
</dbReference>
<dbReference type="RefSeq" id="WP_010886436.1">
    <property type="nucleotide sequence ID" value="NZ_OZ025638.1"/>
</dbReference>
<dbReference type="PDB" id="2Z8R">
    <property type="method" value="X-ray"/>
    <property type="resolution" value="1.40 A"/>
    <property type="chains" value="A/B=38-620"/>
</dbReference>
<dbReference type="PDB" id="2Z8S">
    <property type="method" value="X-ray"/>
    <property type="resolution" value="2.50 A"/>
    <property type="chains" value="A/B=38-620"/>
</dbReference>
<dbReference type="PDB" id="2ZUX">
    <property type="method" value="X-ray"/>
    <property type="resolution" value="1.32 A"/>
    <property type="chains" value="A/B=38-620"/>
</dbReference>
<dbReference type="PDBsum" id="2Z8R"/>
<dbReference type="PDBsum" id="2Z8S"/>
<dbReference type="PDBsum" id="2ZUX"/>
<dbReference type="SMR" id="O31526"/>
<dbReference type="FunCoup" id="O31526">
    <property type="interactions" value="50"/>
</dbReference>
<dbReference type="STRING" id="224308.BSU07050"/>
<dbReference type="CAZy" id="PL11">
    <property type="family name" value="Polysaccharide Lyase Family 11"/>
</dbReference>
<dbReference type="PaxDb" id="224308-BSU07050"/>
<dbReference type="EnsemblBacteria" id="CAB12524">
    <property type="protein sequence ID" value="CAB12524"/>
    <property type="gene ID" value="BSU_07050"/>
</dbReference>
<dbReference type="GeneID" id="938769"/>
<dbReference type="KEGG" id="bsu:BSU07050"/>
<dbReference type="PATRIC" id="fig|224308.43.peg.743"/>
<dbReference type="eggNOG" id="COG3401">
    <property type="taxonomic scope" value="Bacteria"/>
</dbReference>
<dbReference type="InParanoid" id="O31526"/>
<dbReference type="OrthoDB" id="9802318at2"/>
<dbReference type="PhylomeDB" id="O31526"/>
<dbReference type="BioCyc" id="BSUB:BSU07050-MONOMER"/>
<dbReference type="BioCyc" id="MetaCyc:BSU07050-MONOMER"/>
<dbReference type="BRENDA" id="4.2.2.23">
    <property type="organism ID" value="658"/>
</dbReference>
<dbReference type="SABIO-RK" id="O31526"/>
<dbReference type="EvolutionaryTrace" id="O31526"/>
<dbReference type="Proteomes" id="UP000001570">
    <property type="component" value="Chromosome"/>
</dbReference>
<dbReference type="GO" id="GO:0005576">
    <property type="term" value="C:extracellular region"/>
    <property type="evidence" value="ECO:0007669"/>
    <property type="project" value="UniProtKB-SubCell"/>
</dbReference>
<dbReference type="GO" id="GO:0046872">
    <property type="term" value="F:metal ion binding"/>
    <property type="evidence" value="ECO:0007669"/>
    <property type="project" value="UniProtKB-KW"/>
</dbReference>
<dbReference type="GO" id="GO:0102210">
    <property type="term" value="F:rhamnogalacturonan endolyase activity"/>
    <property type="evidence" value="ECO:0007669"/>
    <property type="project" value="UniProtKB-EC"/>
</dbReference>
<dbReference type="GO" id="GO:0071555">
    <property type="term" value="P:cell wall organization"/>
    <property type="evidence" value="ECO:0007669"/>
    <property type="project" value="UniProtKB-KW"/>
</dbReference>
<dbReference type="CDD" id="cd10318">
    <property type="entry name" value="RGL11"/>
    <property type="match status" value="1"/>
</dbReference>
<dbReference type="Gene3D" id="2.60.40.10">
    <property type="entry name" value="Immunoglobulins"/>
    <property type="match status" value="1"/>
</dbReference>
<dbReference type="InterPro" id="IPR013783">
    <property type="entry name" value="Ig-like_fold"/>
</dbReference>
<dbReference type="InterPro" id="IPR028994">
    <property type="entry name" value="Integrin_alpha_N"/>
</dbReference>
<dbReference type="InterPro" id="IPR041624">
    <property type="entry name" value="RGI_lyase"/>
</dbReference>
<dbReference type="InterPro" id="IPR034641">
    <property type="entry name" value="RGL11"/>
</dbReference>
<dbReference type="InterPro" id="IPR049366">
    <property type="entry name" value="RGL11_C"/>
</dbReference>
<dbReference type="PANTHER" id="PTHR43118">
    <property type="entry name" value="RHAMNOGALACTURONAN LYASE (EUROFUNG)"/>
    <property type="match status" value="1"/>
</dbReference>
<dbReference type="PANTHER" id="PTHR43118:SF1">
    <property type="entry name" value="RHAMNOGALACTURONAN LYASE (EUROFUNG)"/>
    <property type="match status" value="1"/>
</dbReference>
<dbReference type="Pfam" id="PF18370">
    <property type="entry name" value="RGI_lyase"/>
    <property type="match status" value="1"/>
</dbReference>
<dbReference type="Pfam" id="PF21348">
    <property type="entry name" value="RGL11_C"/>
    <property type="match status" value="1"/>
</dbReference>
<dbReference type="SUPFAM" id="SSF69318">
    <property type="entry name" value="Integrin alpha N-terminal domain"/>
    <property type="match status" value="1"/>
</dbReference>
<protein>
    <recommendedName>
        <fullName>Rhamnogalacturonan endolyase YesW</fullName>
        <ecNumber evidence="3 5">4.2.2.23</ecNumber>
    </recommendedName>
</protein>
<comment type="function">
    <text evidence="2 3 5">Pectinolytic enzyme that degrades type I rhamnogalacturonan from plant cell walls and releases oligosaccharide products (PubMed:16682770, PubMed:17449691, PubMed:19193638). Degrades rhamnogalacturonan, polygalacturonic acid, pectic acid and pectin (PubMed:16682770, PubMed:17449691).</text>
</comment>
<comment type="catalytic activity">
    <reaction evidence="3 5">
        <text>Endotype eliminative cleavage of L-alpha-rhamnopyranosyl-(1-&gt;4)-alpha-D-galactopyranosyluronic acid bonds of rhamnogalacturonan I domains in ramified hairy regions of pectin leaving L-rhamnopyranose at the reducing end and 4-deoxy-4,5-unsaturated D-galactopyranosyluronic acid at the non-reducing end.</text>
        <dbReference type="EC" id="4.2.2.23"/>
    </reaction>
</comment>
<comment type="cofactor">
    <cofactor evidence="2 3 4 5">
        <name>Ca(2+)</name>
        <dbReference type="ChEBI" id="CHEBI:29108"/>
    </cofactor>
    <cofactor evidence="2 3">
        <name>Mn(2+)</name>
        <dbReference type="ChEBI" id="CHEBI:29035"/>
    </cofactor>
    <text evidence="2 3 5">Binds 10 calcium ions (PubMed:16682770, PubMed:17449691, PubMed:19193638). The calcium may have a structural role. Requires calcium or manganese for activity (PubMed:16682770, PubMed:17449691).</text>
</comment>
<comment type="biophysicochemical properties">
    <kinetics>
        <KM evidence="5">0.181 mg/ml for rhamnogalacturonan (RG) type I region of plant cell wall pectin</KM>
    </kinetics>
    <phDependence>
        <text evidence="3">Optimum pH is 8.</text>
    </phDependence>
    <temperatureDependence>
        <text evidence="3">Optimum temperature is 60 degrees Celsius.</text>
    </temperatureDependence>
</comment>
<comment type="subunit">
    <text evidence="2 4 5">Monomer.</text>
</comment>
<comment type="subcellular location">
    <subcellularLocation>
        <location evidence="3">Secreted</location>
    </subcellularLocation>
</comment>
<comment type="induction">
    <text evidence="3">Up-regulated by growth on type I rhamnogalacturonan.</text>
</comment>
<comment type="domain">
    <text evidence="5">Rhamnose is bound near the active site, but there are also additional rhamnose-binding sites far away from the active site, which possibly function as a carbohydrate-binding region.</text>
</comment>
<comment type="similarity">
    <text evidence="7">Belongs to the polysaccharide lyase 11 family.</text>
</comment>
<feature type="signal peptide" evidence="8">
    <location>
        <begin position="1"/>
        <end position="37"/>
    </location>
</feature>
<feature type="chain" id="PRO_0000360212" description="Rhamnogalacturonan endolyase YesW">
    <location>
        <begin position="38"/>
        <end position="620"/>
    </location>
</feature>
<feature type="region of interest" description="Disordered" evidence="1">
    <location>
        <begin position="133"/>
        <end position="152"/>
    </location>
</feature>
<feature type="binding site" evidence="5 11">
    <location>
        <position position="152"/>
    </location>
    <ligand>
        <name>substrate</name>
    </ligand>
</feature>
<feature type="binding site" evidence="4 5 9 10 11">
    <location>
        <position position="153"/>
    </location>
    <ligand>
        <name>Ca(2+)</name>
        <dbReference type="ChEBI" id="CHEBI:29108"/>
        <label>1</label>
    </ligand>
</feature>
<feature type="binding site" evidence="4 5 9 10 11">
    <location>
        <position position="158"/>
    </location>
    <ligand>
        <name>Ca(2+)</name>
        <dbReference type="ChEBI" id="CHEBI:29108"/>
        <label>2</label>
    </ligand>
</feature>
<feature type="binding site" evidence="4 5 9 10 11">
    <location>
        <position position="160"/>
    </location>
    <ligand>
        <name>Ca(2+)</name>
        <dbReference type="ChEBI" id="CHEBI:29108"/>
        <label>2</label>
    </ligand>
</feature>
<feature type="binding site" evidence="4 5 9 10 11">
    <location>
        <position position="162"/>
    </location>
    <ligand>
        <name>Ca(2+)</name>
        <dbReference type="ChEBI" id="CHEBI:29108"/>
        <label>2</label>
    </ligand>
</feature>
<feature type="binding site" evidence="4 5 9 10 11">
    <location>
        <position position="164"/>
    </location>
    <ligand>
        <name>Ca(2+)</name>
        <dbReference type="ChEBI" id="CHEBI:29108"/>
        <label>2</label>
    </ligand>
</feature>
<feature type="binding site" evidence="4 5 9 10 11">
    <location>
        <position position="166"/>
    </location>
    <ligand>
        <name>Ca(2+)</name>
        <dbReference type="ChEBI" id="CHEBI:29108"/>
        <label>2</label>
    </ligand>
</feature>
<feature type="binding site" evidence="5 11">
    <location>
        <position position="172"/>
    </location>
    <ligand>
        <name>substrate</name>
    </ligand>
</feature>
<feature type="binding site" evidence="5 11">
    <location>
        <position position="187"/>
    </location>
    <ligand>
        <name>a carbohydrate</name>
        <dbReference type="ChEBI" id="CHEBI:16646"/>
    </ligand>
</feature>
<feature type="binding site" evidence="5 11">
    <location>
        <position position="207"/>
    </location>
    <ligand>
        <name>a carbohydrate</name>
        <dbReference type="ChEBI" id="CHEBI:16646"/>
    </ligand>
</feature>
<feature type="binding site" evidence="4 5 9 10 11">
    <location>
        <position position="222"/>
    </location>
    <ligand>
        <name>Ca(2+)</name>
        <dbReference type="ChEBI" id="CHEBI:29108"/>
        <label>3</label>
    </ligand>
</feature>
<feature type="binding site" evidence="4 5 9 10 11">
    <location>
        <position position="224"/>
    </location>
    <ligand>
        <name>Ca(2+)</name>
        <dbReference type="ChEBI" id="CHEBI:29108"/>
        <label>3</label>
    </ligand>
</feature>
<feature type="binding site" evidence="4 5 9 10 11">
    <location>
        <position position="226"/>
    </location>
    <ligand>
        <name>Ca(2+)</name>
        <dbReference type="ChEBI" id="CHEBI:29108"/>
        <label>3</label>
    </ligand>
</feature>
<feature type="binding site" evidence="4 5 9 10 11">
    <location>
        <position position="228"/>
    </location>
    <ligand>
        <name>Ca(2+)</name>
        <dbReference type="ChEBI" id="CHEBI:29108"/>
        <label>3</label>
    </ligand>
</feature>
<feature type="binding site" evidence="4 5 9 10 11">
    <location>
        <position position="230"/>
    </location>
    <ligand>
        <name>Ca(2+)</name>
        <dbReference type="ChEBI" id="CHEBI:29108"/>
        <label>3</label>
    </ligand>
</feature>
<feature type="binding site" evidence="5 11">
    <location>
        <position position="238"/>
    </location>
    <ligand>
        <name>a carbohydrate</name>
        <dbReference type="ChEBI" id="CHEBI:16646"/>
    </ligand>
</feature>
<feature type="binding site" evidence="5 11">
    <location>
        <position position="255"/>
    </location>
    <ligand>
        <name>a carbohydrate</name>
        <dbReference type="ChEBI" id="CHEBI:16646"/>
    </ligand>
</feature>
<feature type="binding site" evidence="4 5 9 10 11">
    <location>
        <position position="363"/>
    </location>
    <ligand>
        <name>Ca(2+)</name>
        <dbReference type="ChEBI" id="CHEBI:29108"/>
        <label>4</label>
    </ligand>
</feature>
<feature type="binding site" evidence="4 5 9 10 11">
    <location>
        <position position="369"/>
    </location>
    <ligand>
        <name>Ca(2+)</name>
        <dbReference type="ChEBI" id="CHEBI:29108"/>
        <label>5</label>
    </ligand>
</feature>
<feature type="binding site" evidence="4 5 9 10 11">
    <location>
        <position position="371"/>
    </location>
    <ligand>
        <name>Ca(2+)</name>
        <dbReference type="ChEBI" id="CHEBI:29108"/>
        <label>5</label>
    </ligand>
</feature>
<feature type="binding site" evidence="4 5 9 10 11">
    <location>
        <position position="371"/>
    </location>
    <ligand>
        <name>Ca(2+)</name>
        <dbReference type="ChEBI" id="CHEBI:29108"/>
        <label>6</label>
    </ligand>
</feature>
<feature type="binding site" evidence="4 5 9 10 11">
    <location>
        <position position="373"/>
    </location>
    <ligand>
        <name>Ca(2+)</name>
        <dbReference type="ChEBI" id="CHEBI:29108"/>
        <label>5</label>
    </ligand>
</feature>
<feature type="binding site" evidence="4 5 9 10 11">
    <location>
        <position position="373"/>
    </location>
    <ligand>
        <name>Ca(2+)</name>
        <dbReference type="ChEBI" id="CHEBI:29108"/>
        <label>6</label>
    </ligand>
</feature>
<feature type="binding site" evidence="4 5 9 10 11">
    <location>
        <position position="375"/>
    </location>
    <ligand>
        <name>Ca(2+)</name>
        <dbReference type="ChEBI" id="CHEBI:29108"/>
        <label>5</label>
    </ligand>
</feature>
<feature type="binding site" evidence="4 5 9 10 11">
    <location>
        <position position="377"/>
    </location>
    <ligand>
        <name>Ca(2+)</name>
        <dbReference type="ChEBI" id="CHEBI:29108"/>
        <label>5</label>
    </ligand>
</feature>
<feature type="binding site" evidence="4 5 9 10 11">
    <location>
        <position position="377"/>
    </location>
    <ligand>
        <name>Ca(2+)</name>
        <dbReference type="ChEBI" id="CHEBI:29108"/>
        <label>6</label>
    </ligand>
</feature>
<feature type="binding site" evidence="4 5 9 10 11">
    <location>
        <position position="386"/>
    </location>
    <ligand>
        <name>Ca(2+)</name>
        <dbReference type="ChEBI" id="CHEBI:29108"/>
        <label>6</label>
    </ligand>
</feature>
<feature type="binding site" evidence="4 5 9 10 11">
    <location>
        <position position="387"/>
    </location>
    <ligand>
        <name>Ca(2+)</name>
        <dbReference type="ChEBI" id="CHEBI:29108"/>
        <label>6</label>
    </ligand>
</feature>
<feature type="binding site" evidence="4 5 9 10 11">
    <location>
        <position position="399"/>
    </location>
    <ligand>
        <name>Ca(2+)</name>
        <dbReference type="ChEBI" id="CHEBI:29108"/>
        <label>4</label>
    </ligand>
</feature>
<feature type="binding site" evidence="4 5 9 10 11">
    <location>
        <position position="401"/>
    </location>
    <ligand>
        <name>Ca(2+)</name>
        <dbReference type="ChEBI" id="CHEBI:29108"/>
        <label>4</label>
    </ligand>
</feature>
<feature type="binding site" evidence="4 5 9 10 11">
    <location>
        <position position="407"/>
    </location>
    <ligand>
        <name>Ca(2+)</name>
        <dbReference type="ChEBI" id="CHEBI:29108"/>
        <label>7</label>
    </ligand>
</feature>
<feature type="binding site" evidence="4 5 9 10 11">
    <location>
        <position position="409"/>
    </location>
    <ligand>
        <name>Ca(2+)</name>
        <dbReference type="ChEBI" id="CHEBI:29108"/>
        <label>7</label>
    </ligand>
</feature>
<feature type="binding site" evidence="4 5 9 10 11">
    <location>
        <position position="412"/>
    </location>
    <ligand>
        <name>Ca(2+)</name>
        <dbReference type="ChEBI" id="CHEBI:29108"/>
        <label>7</label>
    </ligand>
</feature>
<feature type="binding site" evidence="4 5 9 10 11">
    <location>
        <position position="414"/>
    </location>
    <ligand>
        <name>Ca(2+)</name>
        <dbReference type="ChEBI" id="CHEBI:29108"/>
        <label>7</label>
    </ligand>
</feature>
<feature type="binding site" evidence="4 5 9 10 11">
    <location>
        <position position="416"/>
    </location>
    <ligand>
        <name>Ca(2+)</name>
        <dbReference type="ChEBI" id="CHEBI:29108"/>
        <label>7</label>
    </ligand>
</feature>
<feature type="binding site" evidence="4 5 9 10 11">
    <location>
        <position position="422"/>
    </location>
    <ligand>
        <name>Ca(2+)</name>
        <dbReference type="ChEBI" id="CHEBI:29108"/>
        <label>4</label>
    </ligand>
</feature>
<feature type="binding site" evidence="4 5 10 11">
    <location>
        <position position="452"/>
    </location>
    <ligand>
        <name>substrate</name>
    </ligand>
</feature>
<feature type="binding site" evidence="4 5 10 11">
    <location>
        <position position="457"/>
    </location>
    <ligand>
        <name>Ca(2+)</name>
        <dbReference type="ChEBI" id="CHEBI:29108"/>
        <label>8</label>
    </ligand>
</feature>
<feature type="binding site" evidence="4 5 9 10 11">
    <location>
        <position position="459"/>
    </location>
    <ligand>
        <name>Ca(2+)</name>
        <dbReference type="ChEBI" id="CHEBI:29108"/>
        <label>8</label>
    </ligand>
</feature>
<feature type="binding site" evidence="4 5 9 10 11">
    <location>
        <position position="462"/>
    </location>
    <ligand>
        <name>Ca(2+)</name>
        <dbReference type="ChEBI" id="CHEBI:29108"/>
        <label>8</label>
    </ligand>
</feature>
<feature type="binding site" evidence="4 5 9 10 11">
    <location>
        <position position="464"/>
    </location>
    <ligand>
        <name>Ca(2+)</name>
        <dbReference type="ChEBI" id="CHEBI:29108"/>
        <label>8</label>
    </ligand>
</feature>
<feature type="binding site" evidence="4 5 9 10 11">
    <location>
        <position position="466"/>
    </location>
    <ligand>
        <name>Ca(2+)</name>
        <dbReference type="ChEBI" id="CHEBI:29108"/>
        <label>8</label>
    </ligand>
</feature>
<feature type="binding site" evidence="4 5 9 10 11">
    <location>
        <position position="496"/>
    </location>
    <ligand>
        <name>Ca(2+)</name>
        <dbReference type="ChEBI" id="CHEBI:29108"/>
        <label>9</label>
    </ligand>
</feature>
<feature type="binding site" evidence="4 5 9 10 11">
    <location>
        <position position="498"/>
    </location>
    <ligand>
        <name>Ca(2+)</name>
        <dbReference type="ChEBI" id="CHEBI:29108"/>
        <label>9</label>
    </ligand>
</feature>
<feature type="binding site" evidence="4 5 9 10 11">
    <location>
        <position position="500"/>
    </location>
    <ligand>
        <name>Ca(2+)</name>
        <dbReference type="ChEBI" id="CHEBI:29108"/>
        <label>9</label>
    </ligand>
</feature>
<feature type="binding site" evidence="4 5 9 10 11">
    <location>
        <position position="502"/>
    </location>
    <ligand>
        <name>Ca(2+)</name>
        <dbReference type="ChEBI" id="CHEBI:29108"/>
        <label>9</label>
    </ligand>
</feature>
<feature type="binding site" evidence="5 11">
    <location>
        <begin position="532"/>
        <end position="534"/>
    </location>
    <ligand>
        <name>substrate</name>
    </ligand>
</feature>
<feature type="binding site" evidence="4 5 9 10 11">
    <location>
        <position position="543"/>
    </location>
    <ligand>
        <name>Ca(2+)</name>
        <dbReference type="ChEBI" id="CHEBI:29108"/>
        <label>10</label>
    </ligand>
</feature>
<feature type="binding site" evidence="4 5 9 10 11">
    <location>
        <position position="545"/>
    </location>
    <ligand>
        <name>Ca(2+)</name>
        <dbReference type="ChEBI" id="CHEBI:29108"/>
        <label>10</label>
    </ligand>
</feature>
<feature type="binding site" evidence="4 5 9 10 11">
    <location>
        <position position="547"/>
    </location>
    <ligand>
        <name>Ca(2+)</name>
        <dbReference type="ChEBI" id="CHEBI:29108"/>
        <label>10</label>
    </ligand>
</feature>
<feature type="binding site" evidence="4 5 9 10 11">
    <location>
        <position position="549"/>
    </location>
    <ligand>
        <name>Ca(2+)</name>
        <dbReference type="ChEBI" id="CHEBI:29108"/>
        <label>10</label>
    </ligand>
</feature>
<feature type="binding site" evidence="4 5 9 10 11">
    <location>
        <position position="551"/>
    </location>
    <ligand>
        <name>Ca(2+)</name>
        <dbReference type="ChEBI" id="CHEBI:29108"/>
        <label>10</label>
    </ligand>
</feature>
<feature type="binding site" evidence="4 5 9 10 11">
    <location>
        <position position="592"/>
    </location>
    <ligand>
        <name>Ca(2+)</name>
        <dbReference type="ChEBI" id="CHEBI:29108"/>
        <label>1</label>
    </ligand>
</feature>
<feature type="binding site" evidence="4 5 9 10 11">
    <location>
        <position position="594"/>
    </location>
    <ligand>
        <name>Ca(2+)</name>
        <dbReference type="ChEBI" id="CHEBI:29108"/>
        <label>1</label>
    </ligand>
</feature>
<feature type="binding site" evidence="4 5 10 11">
    <location>
        <position position="595"/>
    </location>
    <ligand>
        <name>substrate</name>
    </ligand>
</feature>
<feature type="binding site" evidence="4 5 9 10 11">
    <location>
        <position position="596"/>
    </location>
    <ligand>
        <name>Ca(2+)</name>
        <dbReference type="ChEBI" id="CHEBI:29108"/>
        <label>1</label>
    </ligand>
</feature>
<feature type="mutagenesis site" description="Strongly reduced catalytic activity." evidence="4">
    <original>H</original>
    <variation>A</variation>
    <location>
        <position position="363"/>
    </location>
</feature>
<feature type="mutagenesis site" description="Strongly reduced catalytic activity." evidence="4">
    <original>H</original>
    <variation>A</variation>
    <location>
        <position position="399"/>
    </location>
</feature>
<feature type="mutagenesis site" description="Strongly reduced catalytic activity." evidence="4">
    <original>D</original>
    <variation>N</variation>
    <location>
        <position position="401"/>
    </location>
</feature>
<feature type="mutagenesis site" description="Loss of activity." evidence="4">
    <original>E</original>
    <variation>Q</variation>
    <location>
        <position position="422"/>
    </location>
</feature>
<feature type="mutagenesis site" description="Strongly reduced catalytic activity and reduced affinity for substrate." evidence="4">
    <original>R</original>
    <variation>A</variation>
    <location>
        <position position="452"/>
    </location>
</feature>
<feature type="mutagenesis site" description="Strongly reduced catalytic activity and reduced affinity for substrate." evidence="4">
    <original>K</original>
    <variation>A</variation>
    <location>
        <position position="535"/>
    </location>
</feature>
<feature type="mutagenesis site" description="Strongly reduced catalytic activity." evidence="4">
    <original>Y</original>
    <variation>F</variation>
    <location>
        <position position="595"/>
    </location>
</feature>
<feature type="strand" evidence="14">
    <location>
        <begin position="50"/>
        <end position="54"/>
    </location>
</feature>
<feature type="strand" evidence="14">
    <location>
        <begin position="57"/>
        <end position="61"/>
    </location>
</feature>
<feature type="strand" evidence="14">
    <location>
        <begin position="73"/>
        <end position="78"/>
    </location>
</feature>
<feature type="strand" evidence="14">
    <location>
        <begin position="88"/>
        <end position="95"/>
    </location>
</feature>
<feature type="strand" evidence="14">
    <location>
        <begin position="103"/>
        <end position="110"/>
    </location>
</feature>
<feature type="strand" evidence="14">
    <location>
        <begin position="121"/>
        <end position="132"/>
    </location>
</feature>
<feature type="strand" evidence="14">
    <location>
        <begin position="149"/>
        <end position="157"/>
    </location>
</feature>
<feature type="strand" evidence="14">
    <location>
        <begin position="159"/>
        <end position="164"/>
    </location>
</feature>
<feature type="strand" evidence="14">
    <location>
        <begin position="166"/>
        <end position="173"/>
    </location>
</feature>
<feature type="strand" evidence="14">
    <location>
        <begin position="189"/>
        <end position="193"/>
    </location>
</feature>
<feature type="strand" evidence="14">
    <location>
        <begin position="199"/>
        <end position="204"/>
    </location>
</feature>
<feature type="turn" evidence="13">
    <location>
        <begin position="213"/>
        <end position="215"/>
    </location>
</feature>
<feature type="strand" evidence="14">
    <location>
        <begin position="219"/>
        <end position="221"/>
    </location>
</feature>
<feature type="strand" evidence="14">
    <location>
        <begin position="223"/>
        <end position="228"/>
    </location>
</feature>
<feature type="strand" evidence="14">
    <location>
        <begin position="230"/>
        <end position="235"/>
    </location>
</feature>
<feature type="strand" evidence="13">
    <location>
        <begin position="246"/>
        <end position="248"/>
    </location>
</feature>
<feature type="strand" evidence="14">
    <location>
        <begin position="267"/>
        <end position="272"/>
    </location>
</feature>
<feature type="turn" evidence="14">
    <location>
        <begin position="273"/>
        <end position="275"/>
    </location>
</feature>
<feature type="strand" evidence="14">
    <location>
        <begin position="278"/>
        <end position="283"/>
    </location>
</feature>
<feature type="helix" evidence="14">
    <location>
        <begin position="291"/>
        <end position="294"/>
    </location>
</feature>
<feature type="strand" evidence="14">
    <location>
        <begin position="297"/>
        <end position="300"/>
    </location>
</feature>
<feature type="helix" evidence="14">
    <location>
        <begin position="301"/>
        <end position="303"/>
    </location>
</feature>
<feature type="strand" evidence="14">
    <location>
        <begin position="305"/>
        <end position="310"/>
    </location>
</feature>
<feature type="strand" evidence="14">
    <location>
        <begin position="314"/>
        <end position="316"/>
    </location>
</feature>
<feature type="strand" evidence="14">
    <location>
        <begin position="318"/>
        <end position="323"/>
    </location>
</feature>
<feature type="strand" evidence="14">
    <location>
        <begin position="326"/>
        <end position="328"/>
    </location>
</feature>
<feature type="strand" evidence="14">
    <location>
        <begin position="330"/>
        <end position="337"/>
    </location>
</feature>
<feature type="strand" evidence="14">
    <location>
        <begin position="340"/>
        <end position="348"/>
    </location>
</feature>
<feature type="helix" evidence="14">
    <location>
        <begin position="355"/>
        <end position="357"/>
    </location>
</feature>
<feature type="strand" evidence="14">
    <location>
        <begin position="366"/>
        <end position="368"/>
    </location>
</feature>
<feature type="strand" evidence="14">
    <location>
        <begin position="371"/>
        <end position="375"/>
    </location>
</feature>
<feature type="strand" evidence="14">
    <location>
        <begin position="377"/>
        <end position="380"/>
    </location>
</feature>
<feature type="strand" evidence="14">
    <location>
        <begin position="383"/>
        <end position="385"/>
    </location>
</feature>
<feature type="strand" evidence="14">
    <location>
        <begin position="391"/>
        <end position="394"/>
    </location>
</feature>
<feature type="strand" evidence="14">
    <location>
        <begin position="403"/>
        <end position="406"/>
    </location>
</feature>
<feature type="strand" evidence="14">
    <location>
        <begin position="412"/>
        <end position="414"/>
    </location>
</feature>
<feature type="strand" evidence="14">
    <location>
        <begin position="416"/>
        <end position="420"/>
    </location>
</feature>
<feature type="strand" evidence="14">
    <location>
        <begin position="429"/>
        <end position="434"/>
    </location>
</feature>
<feature type="turn" evidence="14">
    <location>
        <begin position="435"/>
        <end position="437"/>
    </location>
</feature>
<feature type="strand" evidence="14">
    <location>
        <begin position="440"/>
        <end position="444"/>
    </location>
</feature>
<feature type="strand" evidence="14">
    <location>
        <begin position="453"/>
        <end position="456"/>
    </location>
</feature>
<feature type="strand" evidence="14">
    <location>
        <begin position="462"/>
        <end position="464"/>
    </location>
</feature>
<feature type="strand" evidence="14">
    <location>
        <begin position="466"/>
        <end position="469"/>
    </location>
</feature>
<feature type="strand" evidence="14">
    <location>
        <begin position="472"/>
        <end position="474"/>
    </location>
</feature>
<feature type="strand" evidence="12">
    <location>
        <begin position="482"/>
        <end position="484"/>
    </location>
</feature>
<feature type="strand" evidence="14">
    <location>
        <begin position="490"/>
        <end position="493"/>
    </location>
</feature>
<feature type="strand" evidence="14">
    <location>
        <begin position="496"/>
        <end position="500"/>
    </location>
</feature>
<feature type="strand" evidence="14">
    <location>
        <begin position="502"/>
        <end position="505"/>
    </location>
</feature>
<feature type="strand" evidence="14">
    <location>
        <begin position="508"/>
        <end position="513"/>
    </location>
</feature>
<feature type="turn" evidence="14">
    <location>
        <begin position="514"/>
        <end position="517"/>
    </location>
</feature>
<feature type="strand" evidence="14">
    <location>
        <begin position="518"/>
        <end position="524"/>
    </location>
</feature>
<feature type="helix" evidence="14">
    <location>
        <begin position="533"/>
        <end position="535"/>
    </location>
</feature>
<feature type="strand" evidence="14">
    <location>
        <begin position="539"/>
        <end position="542"/>
    </location>
</feature>
<feature type="strand" evidence="14">
    <location>
        <begin position="545"/>
        <end position="549"/>
    </location>
</feature>
<feature type="strand" evidence="14">
    <location>
        <begin position="551"/>
        <end position="556"/>
    </location>
</feature>
<feature type="strand" evidence="14">
    <location>
        <begin position="559"/>
        <end position="565"/>
    </location>
</feature>
<feature type="helix" evidence="14">
    <location>
        <begin position="578"/>
        <end position="580"/>
    </location>
</feature>
<feature type="helix" evidence="14">
    <location>
        <begin position="584"/>
        <end position="590"/>
    </location>
</feature>
<feature type="strand" evidence="14">
    <location>
        <begin position="593"/>
        <end position="595"/>
    </location>
</feature>
<name>YESW_BACSU</name>